<feature type="chain" id="PRO_0000308895" description="DNA-directed RNA polymerase subunit beta'">
    <location>
        <begin position="1"/>
        <end position="1411"/>
    </location>
</feature>
<feature type="region of interest" description="Disordered" evidence="2">
    <location>
        <begin position="1391"/>
        <end position="1411"/>
    </location>
</feature>
<feature type="binding site" evidence="1">
    <location>
        <position position="70"/>
    </location>
    <ligand>
        <name>Zn(2+)</name>
        <dbReference type="ChEBI" id="CHEBI:29105"/>
        <label>1</label>
    </ligand>
</feature>
<feature type="binding site" evidence="1">
    <location>
        <position position="72"/>
    </location>
    <ligand>
        <name>Zn(2+)</name>
        <dbReference type="ChEBI" id="CHEBI:29105"/>
        <label>1</label>
    </ligand>
</feature>
<feature type="binding site" evidence="1">
    <location>
        <position position="85"/>
    </location>
    <ligand>
        <name>Zn(2+)</name>
        <dbReference type="ChEBI" id="CHEBI:29105"/>
        <label>1</label>
    </ligand>
</feature>
<feature type="binding site" evidence="1">
    <location>
        <position position="88"/>
    </location>
    <ligand>
        <name>Zn(2+)</name>
        <dbReference type="ChEBI" id="CHEBI:29105"/>
        <label>1</label>
    </ligand>
</feature>
<feature type="binding site" evidence="1">
    <location>
        <position position="458"/>
    </location>
    <ligand>
        <name>Mg(2+)</name>
        <dbReference type="ChEBI" id="CHEBI:18420"/>
    </ligand>
</feature>
<feature type="binding site" evidence="1">
    <location>
        <position position="460"/>
    </location>
    <ligand>
        <name>Mg(2+)</name>
        <dbReference type="ChEBI" id="CHEBI:18420"/>
    </ligand>
</feature>
<feature type="binding site" evidence="1">
    <location>
        <position position="462"/>
    </location>
    <ligand>
        <name>Mg(2+)</name>
        <dbReference type="ChEBI" id="CHEBI:18420"/>
    </ligand>
</feature>
<feature type="binding site" evidence="1">
    <location>
        <position position="813"/>
    </location>
    <ligand>
        <name>Zn(2+)</name>
        <dbReference type="ChEBI" id="CHEBI:29105"/>
        <label>2</label>
    </ligand>
</feature>
<feature type="binding site" evidence="1">
    <location>
        <position position="887"/>
    </location>
    <ligand>
        <name>Zn(2+)</name>
        <dbReference type="ChEBI" id="CHEBI:29105"/>
        <label>2</label>
    </ligand>
</feature>
<feature type="binding site" evidence="1">
    <location>
        <position position="894"/>
    </location>
    <ligand>
        <name>Zn(2+)</name>
        <dbReference type="ChEBI" id="CHEBI:29105"/>
        <label>2</label>
    </ligand>
</feature>
<feature type="binding site" evidence="1">
    <location>
        <position position="897"/>
    </location>
    <ligand>
        <name>Zn(2+)</name>
        <dbReference type="ChEBI" id="CHEBI:29105"/>
        <label>2</label>
    </ligand>
</feature>
<reference key="1">
    <citation type="submission" date="2006-12" db="EMBL/GenBank/DDBJ databases">
        <title>Complete sequence of chromosome 1 of Verminephrobacter eiseniae EF01-2.</title>
        <authorList>
            <person name="Copeland A."/>
            <person name="Lucas S."/>
            <person name="Lapidus A."/>
            <person name="Barry K."/>
            <person name="Detter J.C."/>
            <person name="Glavina del Rio T."/>
            <person name="Dalin E."/>
            <person name="Tice H."/>
            <person name="Pitluck S."/>
            <person name="Chertkov O."/>
            <person name="Brettin T."/>
            <person name="Bruce D."/>
            <person name="Han C."/>
            <person name="Tapia R."/>
            <person name="Gilna P."/>
            <person name="Schmutz J."/>
            <person name="Larimer F."/>
            <person name="Land M."/>
            <person name="Hauser L."/>
            <person name="Kyrpides N."/>
            <person name="Kim E."/>
            <person name="Stahl D."/>
            <person name="Richardson P."/>
        </authorList>
    </citation>
    <scope>NUCLEOTIDE SEQUENCE [LARGE SCALE GENOMIC DNA]</scope>
    <source>
        <strain>EF01-2</strain>
    </source>
</reference>
<protein>
    <recommendedName>
        <fullName evidence="1">DNA-directed RNA polymerase subunit beta'</fullName>
        <shortName evidence="1">RNAP subunit beta'</shortName>
        <ecNumber evidence="1">2.7.7.6</ecNumber>
    </recommendedName>
    <alternativeName>
        <fullName evidence="1">RNA polymerase subunit beta'</fullName>
    </alternativeName>
    <alternativeName>
        <fullName evidence="1">Transcriptase subunit beta'</fullName>
    </alternativeName>
</protein>
<keyword id="KW-0240">DNA-directed RNA polymerase</keyword>
<keyword id="KW-0460">Magnesium</keyword>
<keyword id="KW-0479">Metal-binding</keyword>
<keyword id="KW-0548">Nucleotidyltransferase</keyword>
<keyword id="KW-1185">Reference proteome</keyword>
<keyword id="KW-0804">Transcription</keyword>
<keyword id="KW-0808">Transferase</keyword>
<keyword id="KW-0862">Zinc</keyword>
<organism>
    <name type="scientific">Verminephrobacter eiseniae (strain EF01-2)</name>
    <dbReference type="NCBI Taxonomy" id="391735"/>
    <lineage>
        <taxon>Bacteria</taxon>
        <taxon>Pseudomonadati</taxon>
        <taxon>Pseudomonadota</taxon>
        <taxon>Betaproteobacteria</taxon>
        <taxon>Burkholderiales</taxon>
        <taxon>Comamonadaceae</taxon>
        <taxon>Verminephrobacter</taxon>
    </lineage>
</organism>
<dbReference type="EC" id="2.7.7.6" evidence="1"/>
<dbReference type="EMBL" id="CP000542">
    <property type="protein sequence ID" value="ABM58013.1"/>
    <property type="molecule type" value="Genomic_DNA"/>
</dbReference>
<dbReference type="RefSeq" id="WP_011810016.1">
    <property type="nucleotide sequence ID" value="NC_008786.1"/>
</dbReference>
<dbReference type="SMR" id="A1WK56"/>
<dbReference type="STRING" id="391735.Veis_2265"/>
<dbReference type="GeneID" id="76460828"/>
<dbReference type="KEGG" id="vei:Veis_2265"/>
<dbReference type="eggNOG" id="COG0086">
    <property type="taxonomic scope" value="Bacteria"/>
</dbReference>
<dbReference type="HOGENOM" id="CLU_000524_3_1_4"/>
<dbReference type="OrthoDB" id="9815296at2"/>
<dbReference type="Proteomes" id="UP000000374">
    <property type="component" value="Chromosome"/>
</dbReference>
<dbReference type="GO" id="GO:0000428">
    <property type="term" value="C:DNA-directed RNA polymerase complex"/>
    <property type="evidence" value="ECO:0007669"/>
    <property type="project" value="UniProtKB-KW"/>
</dbReference>
<dbReference type="GO" id="GO:0003677">
    <property type="term" value="F:DNA binding"/>
    <property type="evidence" value="ECO:0007669"/>
    <property type="project" value="UniProtKB-UniRule"/>
</dbReference>
<dbReference type="GO" id="GO:0003899">
    <property type="term" value="F:DNA-directed RNA polymerase activity"/>
    <property type="evidence" value="ECO:0007669"/>
    <property type="project" value="UniProtKB-UniRule"/>
</dbReference>
<dbReference type="GO" id="GO:0000287">
    <property type="term" value="F:magnesium ion binding"/>
    <property type="evidence" value="ECO:0007669"/>
    <property type="project" value="UniProtKB-UniRule"/>
</dbReference>
<dbReference type="GO" id="GO:0008270">
    <property type="term" value="F:zinc ion binding"/>
    <property type="evidence" value="ECO:0007669"/>
    <property type="project" value="UniProtKB-UniRule"/>
</dbReference>
<dbReference type="GO" id="GO:0006351">
    <property type="term" value="P:DNA-templated transcription"/>
    <property type="evidence" value="ECO:0007669"/>
    <property type="project" value="UniProtKB-UniRule"/>
</dbReference>
<dbReference type="CDD" id="cd02655">
    <property type="entry name" value="RNAP_beta'_C"/>
    <property type="match status" value="1"/>
</dbReference>
<dbReference type="CDD" id="cd01609">
    <property type="entry name" value="RNAP_beta'_N"/>
    <property type="match status" value="1"/>
</dbReference>
<dbReference type="FunFam" id="1.10.132.30:FF:000003">
    <property type="entry name" value="DNA-directed RNA polymerase subunit beta"/>
    <property type="match status" value="1"/>
</dbReference>
<dbReference type="FunFam" id="1.10.150.390:FF:000002">
    <property type="entry name" value="DNA-directed RNA polymerase subunit beta"/>
    <property type="match status" value="1"/>
</dbReference>
<dbReference type="FunFam" id="4.10.860.120:FF:000001">
    <property type="entry name" value="DNA-directed RNA polymerase subunit beta"/>
    <property type="match status" value="1"/>
</dbReference>
<dbReference type="Gene3D" id="1.10.132.30">
    <property type="match status" value="1"/>
</dbReference>
<dbReference type="Gene3D" id="1.10.150.390">
    <property type="match status" value="1"/>
</dbReference>
<dbReference type="Gene3D" id="1.10.1790.20">
    <property type="match status" value="1"/>
</dbReference>
<dbReference type="Gene3D" id="1.10.40.90">
    <property type="match status" value="1"/>
</dbReference>
<dbReference type="Gene3D" id="2.40.40.20">
    <property type="match status" value="1"/>
</dbReference>
<dbReference type="Gene3D" id="2.40.50.100">
    <property type="match status" value="3"/>
</dbReference>
<dbReference type="Gene3D" id="4.10.860.120">
    <property type="entry name" value="RNA polymerase II, clamp domain"/>
    <property type="match status" value="1"/>
</dbReference>
<dbReference type="Gene3D" id="1.10.274.100">
    <property type="entry name" value="RNA polymerase Rpb1, domain 3"/>
    <property type="match status" value="1"/>
</dbReference>
<dbReference type="HAMAP" id="MF_01322">
    <property type="entry name" value="RNApol_bact_RpoC"/>
    <property type="match status" value="1"/>
</dbReference>
<dbReference type="InterPro" id="IPR045867">
    <property type="entry name" value="DNA-dir_RpoC_beta_prime"/>
</dbReference>
<dbReference type="InterPro" id="IPR012754">
    <property type="entry name" value="DNA-dir_RpoC_beta_prime_bact"/>
</dbReference>
<dbReference type="InterPro" id="IPR000722">
    <property type="entry name" value="RNA_pol_asu"/>
</dbReference>
<dbReference type="InterPro" id="IPR006592">
    <property type="entry name" value="RNA_pol_N"/>
</dbReference>
<dbReference type="InterPro" id="IPR007080">
    <property type="entry name" value="RNA_pol_Rpb1_1"/>
</dbReference>
<dbReference type="InterPro" id="IPR007066">
    <property type="entry name" value="RNA_pol_Rpb1_3"/>
</dbReference>
<dbReference type="InterPro" id="IPR042102">
    <property type="entry name" value="RNA_pol_Rpb1_3_sf"/>
</dbReference>
<dbReference type="InterPro" id="IPR007083">
    <property type="entry name" value="RNA_pol_Rpb1_4"/>
</dbReference>
<dbReference type="InterPro" id="IPR007081">
    <property type="entry name" value="RNA_pol_Rpb1_5"/>
</dbReference>
<dbReference type="InterPro" id="IPR044893">
    <property type="entry name" value="RNA_pol_Rpb1_clamp_domain"/>
</dbReference>
<dbReference type="InterPro" id="IPR038120">
    <property type="entry name" value="Rpb1_funnel_sf"/>
</dbReference>
<dbReference type="NCBIfam" id="TIGR02386">
    <property type="entry name" value="rpoC_TIGR"/>
    <property type="match status" value="1"/>
</dbReference>
<dbReference type="PANTHER" id="PTHR19376">
    <property type="entry name" value="DNA-DIRECTED RNA POLYMERASE"/>
    <property type="match status" value="1"/>
</dbReference>
<dbReference type="PANTHER" id="PTHR19376:SF54">
    <property type="entry name" value="DNA-DIRECTED RNA POLYMERASE SUBUNIT BETA"/>
    <property type="match status" value="1"/>
</dbReference>
<dbReference type="Pfam" id="PF04997">
    <property type="entry name" value="RNA_pol_Rpb1_1"/>
    <property type="match status" value="1"/>
</dbReference>
<dbReference type="Pfam" id="PF00623">
    <property type="entry name" value="RNA_pol_Rpb1_2"/>
    <property type="match status" value="2"/>
</dbReference>
<dbReference type="Pfam" id="PF04983">
    <property type="entry name" value="RNA_pol_Rpb1_3"/>
    <property type="match status" value="1"/>
</dbReference>
<dbReference type="Pfam" id="PF05000">
    <property type="entry name" value="RNA_pol_Rpb1_4"/>
    <property type="match status" value="1"/>
</dbReference>
<dbReference type="Pfam" id="PF04998">
    <property type="entry name" value="RNA_pol_Rpb1_5"/>
    <property type="match status" value="1"/>
</dbReference>
<dbReference type="SMART" id="SM00663">
    <property type="entry name" value="RPOLA_N"/>
    <property type="match status" value="1"/>
</dbReference>
<dbReference type="SUPFAM" id="SSF64484">
    <property type="entry name" value="beta and beta-prime subunits of DNA dependent RNA-polymerase"/>
    <property type="match status" value="1"/>
</dbReference>
<sequence length="1411" mass="155018">MKSLLDLFKQFTPDEHFDAIRIGMASPEKIRSWSFGEVKKPETINYRTFKPERDGLFCAKIFGPIKDYECLCGKYKRLKHRGVICEKCGVEVTQTKVRRERMGHIDLAAPCAHIWFLKSLPSRLGMVLDMTLRDIERVLYFEAYVVTDPGMTALKKLSIMSEEDYEAKRKEYGDEFIAKMGAEGIKDLLESIDIDLSIEKLRGDLTGSEVKVKKNAKRLKVLEAFKKSGIKPEWMVLQVLPVLPPDLRPLVPLDGGRFATSDLNDLYRRVINRNSRLRRLLELKAPEIIARNEKRMLQEAVDSLLDNGRRGKAMTGANKRALKSLADMIKGKSGRFRQNLLGKRVDYSGRSVITVGPTLKLHQCGLPKLMALELFKPFIFSRLEAMGIATTIKAAKKEVESGTPVVWDILEEVIKEHPVMLNRAPTLHRLGIQAFEPILIEGKAIQLHPLVCSAFNADFDGDQMAVHVPLSVEAQMEARTLMLASNNVLFPASGEPSIVPSQDVVLGLYYATRDRINGKGEGLVFADTGEVQRAFDAGEVELAARITVRLTEWSKPKDSDALVPTTALVETTAGRALLSEILPPGLPFSYVNKALKKKEISRLINVSFRKCGLKATVVFADKLLQNGFRLATRAGISIAIDDMLVPPQKAGIIERSEREVKEFEQQYVSGLVTAGERYNKVVDIWGKAGDEVSKAMMAQLSKEQVIDRHGQQVSQESFNSIYMMADSGARGSAAQIRQVAGMRGLMAKPDGSIIETPITANFREGLNVLEYFISTHGARKGLADTALKTANSGYLTRRLVDVTQDLVVTEEDCETANGSLMRAIVEGGEVIESLRDRILGRTAAEEVLHPENRMVLVPVGVMLDEDLIEELEAAGVDEVKVRTALTCETRYGLCAKCYGRDLGRGGLINLGEAVGVIAAQSIGEPGTQLTMRTFHIGGAASRAVIASRVEAKSNGVIGFSSTMRYVSNTKGELVVIARSGEIVIHDEYGRERERHKVPYGATLTVNADQNVKAGTVLAKWEPLTRPIITEFAGRTKFENVEEGLTVARQLDEVTGLSTLVVIDPKRRGAAKVVRPQVKLIDAQGNEVKIPGTDHSVTIGFQVGALIQVRDGQDVGPGEVLARIPVEGQKTRDITGGLPRVAELFEARTPKDKGTLAEMTGTVSFGKETKGKVRLQITDPEGHVFEELVPKEKNILVHEGQVVNKGESIVDGPADPQDILRLLGIEELSRYIVDEVQDVYRLQGVKINDKHIEVIVRQMLRRVVVEDAGESNYISGEQVERSEILNTNEALRAAGKIPAVYSNLLLGITKASLSTDSFISAASFQETTRVLTEAAIMGKRDELRGLKENVIVGRLIPAGTGLAYHQARKAKDAMDDAERRAIADAEAAEMAAQAEVPELDGSSVTASDAAAD</sequence>
<comment type="function">
    <text evidence="1">DNA-dependent RNA polymerase catalyzes the transcription of DNA into RNA using the four ribonucleoside triphosphates as substrates.</text>
</comment>
<comment type="catalytic activity">
    <reaction evidence="1">
        <text>RNA(n) + a ribonucleoside 5'-triphosphate = RNA(n+1) + diphosphate</text>
        <dbReference type="Rhea" id="RHEA:21248"/>
        <dbReference type="Rhea" id="RHEA-COMP:14527"/>
        <dbReference type="Rhea" id="RHEA-COMP:17342"/>
        <dbReference type="ChEBI" id="CHEBI:33019"/>
        <dbReference type="ChEBI" id="CHEBI:61557"/>
        <dbReference type="ChEBI" id="CHEBI:140395"/>
        <dbReference type="EC" id="2.7.7.6"/>
    </reaction>
</comment>
<comment type="cofactor">
    <cofactor evidence="1">
        <name>Mg(2+)</name>
        <dbReference type="ChEBI" id="CHEBI:18420"/>
    </cofactor>
    <text evidence="1">Binds 1 Mg(2+) ion per subunit.</text>
</comment>
<comment type="cofactor">
    <cofactor evidence="1">
        <name>Zn(2+)</name>
        <dbReference type="ChEBI" id="CHEBI:29105"/>
    </cofactor>
    <text evidence="1">Binds 2 Zn(2+) ions per subunit.</text>
</comment>
<comment type="subunit">
    <text evidence="1">The RNAP catalytic core consists of 2 alpha, 1 beta, 1 beta' and 1 omega subunit. When a sigma factor is associated with the core the holoenzyme is formed, which can initiate transcription.</text>
</comment>
<comment type="similarity">
    <text evidence="1">Belongs to the RNA polymerase beta' chain family.</text>
</comment>
<gene>
    <name evidence="1" type="primary">rpoC</name>
    <name type="ordered locus">Veis_2265</name>
</gene>
<accession>A1WK56</accession>
<name>RPOC_VEREI</name>
<evidence type="ECO:0000255" key="1">
    <source>
        <dbReference type="HAMAP-Rule" id="MF_01322"/>
    </source>
</evidence>
<evidence type="ECO:0000256" key="2">
    <source>
        <dbReference type="SAM" id="MobiDB-lite"/>
    </source>
</evidence>
<proteinExistence type="inferred from homology"/>